<accession>Q4R4M9</accession>
<proteinExistence type="evidence at transcript level"/>
<protein>
    <recommendedName>
        <fullName>GTP-binding nuclear protein Ran</fullName>
        <ecNumber evidence="2">3.6.5.-</ecNumber>
    </recommendedName>
    <alternativeName>
        <fullName>GTPase Ran</fullName>
    </alternativeName>
    <alternativeName>
        <fullName>Ras-related nuclear protein</fullName>
    </alternativeName>
</protein>
<dbReference type="EC" id="3.6.5.-" evidence="2"/>
<dbReference type="EMBL" id="AB169865">
    <property type="protein sequence ID" value="BAE01946.1"/>
    <property type="molecule type" value="mRNA"/>
</dbReference>
<dbReference type="RefSeq" id="NP_001271555.1">
    <property type="nucleotide sequence ID" value="NM_001284626.1"/>
</dbReference>
<dbReference type="RefSeq" id="XP_045222250.1">
    <property type="nucleotide sequence ID" value="XM_045366315.2"/>
</dbReference>
<dbReference type="SMR" id="Q4R4M9"/>
<dbReference type="STRING" id="9541.ENSMFAP00000034039"/>
<dbReference type="GeneID" id="102133660"/>
<dbReference type="VEuPathDB" id="HostDB:ENSMFAG00000003494"/>
<dbReference type="eggNOG" id="KOG0096">
    <property type="taxonomic scope" value="Eukaryota"/>
</dbReference>
<dbReference type="Proteomes" id="UP000233100">
    <property type="component" value="Chromosome 11"/>
</dbReference>
<dbReference type="GO" id="GO:0005829">
    <property type="term" value="C:cytosol"/>
    <property type="evidence" value="ECO:0007669"/>
    <property type="project" value="UniProtKB-SubCell"/>
</dbReference>
<dbReference type="GO" id="GO:0042470">
    <property type="term" value="C:melanosome"/>
    <property type="evidence" value="ECO:0007669"/>
    <property type="project" value="UniProtKB-SubCell"/>
</dbReference>
<dbReference type="GO" id="GO:0005635">
    <property type="term" value="C:nuclear envelope"/>
    <property type="evidence" value="ECO:0007669"/>
    <property type="project" value="UniProtKB-SubCell"/>
</dbReference>
<dbReference type="GO" id="GO:0005634">
    <property type="term" value="C:nucleus"/>
    <property type="evidence" value="ECO:0000250"/>
    <property type="project" value="UniProtKB"/>
</dbReference>
<dbReference type="GO" id="GO:0005525">
    <property type="term" value="F:GTP binding"/>
    <property type="evidence" value="ECO:0000250"/>
    <property type="project" value="UniProtKB"/>
</dbReference>
<dbReference type="GO" id="GO:0003924">
    <property type="term" value="F:GTPase activity"/>
    <property type="evidence" value="ECO:0000250"/>
    <property type="project" value="UniProtKB"/>
</dbReference>
<dbReference type="GO" id="GO:0000287">
    <property type="term" value="F:magnesium ion binding"/>
    <property type="evidence" value="ECO:0000250"/>
    <property type="project" value="UniProtKB"/>
</dbReference>
<dbReference type="GO" id="GO:0051301">
    <property type="term" value="P:cell division"/>
    <property type="evidence" value="ECO:0007669"/>
    <property type="project" value="UniProtKB-KW"/>
</dbReference>
<dbReference type="GO" id="GO:0046039">
    <property type="term" value="P:GTP metabolic process"/>
    <property type="evidence" value="ECO:0000250"/>
    <property type="project" value="UniProtKB"/>
</dbReference>
<dbReference type="GO" id="GO:0000070">
    <property type="term" value="P:mitotic sister chromatid segregation"/>
    <property type="evidence" value="ECO:0000250"/>
    <property type="project" value="UniProtKB"/>
</dbReference>
<dbReference type="GO" id="GO:0006611">
    <property type="term" value="P:protein export from nucleus"/>
    <property type="evidence" value="ECO:0000250"/>
    <property type="project" value="UniProtKB"/>
</dbReference>
<dbReference type="GO" id="GO:0006606">
    <property type="term" value="P:protein import into nucleus"/>
    <property type="evidence" value="ECO:0000250"/>
    <property type="project" value="UniProtKB"/>
</dbReference>
<dbReference type="GO" id="GO:0000054">
    <property type="term" value="P:ribosomal subunit export from nucleus"/>
    <property type="evidence" value="ECO:0007669"/>
    <property type="project" value="TreeGrafter"/>
</dbReference>
<dbReference type="GO" id="GO:0061015">
    <property type="term" value="P:snRNA import into nucleus"/>
    <property type="evidence" value="ECO:0000250"/>
    <property type="project" value="UniProtKB"/>
</dbReference>
<dbReference type="CDD" id="cd00877">
    <property type="entry name" value="Ran"/>
    <property type="match status" value="1"/>
</dbReference>
<dbReference type="FunFam" id="3.40.50.300:FF:000131">
    <property type="entry name" value="GTP-binding nuclear protein Ran"/>
    <property type="match status" value="1"/>
</dbReference>
<dbReference type="Gene3D" id="3.40.50.300">
    <property type="entry name" value="P-loop containing nucleotide triphosphate hydrolases"/>
    <property type="match status" value="1"/>
</dbReference>
<dbReference type="InterPro" id="IPR027417">
    <property type="entry name" value="P-loop_NTPase"/>
</dbReference>
<dbReference type="InterPro" id="IPR002041">
    <property type="entry name" value="Ran_GTPase"/>
</dbReference>
<dbReference type="InterPro" id="IPR005225">
    <property type="entry name" value="Small_GTP-bd"/>
</dbReference>
<dbReference type="InterPro" id="IPR001806">
    <property type="entry name" value="Small_GTPase"/>
</dbReference>
<dbReference type="NCBIfam" id="TIGR00231">
    <property type="entry name" value="small_GTP"/>
    <property type="match status" value="1"/>
</dbReference>
<dbReference type="PANTHER" id="PTHR24071:SF0">
    <property type="entry name" value="GTP-BINDING NUCLEAR PROTEIN RAN"/>
    <property type="match status" value="1"/>
</dbReference>
<dbReference type="PANTHER" id="PTHR24071">
    <property type="entry name" value="RAN GTPASE"/>
    <property type="match status" value="1"/>
</dbReference>
<dbReference type="Pfam" id="PF00071">
    <property type="entry name" value="Ras"/>
    <property type="match status" value="1"/>
</dbReference>
<dbReference type="PRINTS" id="PR00627">
    <property type="entry name" value="GTPRANTC4"/>
</dbReference>
<dbReference type="SMART" id="SM00175">
    <property type="entry name" value="RAB"/>
    <property type="match status" value="1"/>
</dbReference>
<dbReference type="SMART" id="SM00176">
    <property type="entry name" value="RAN"/>
    <property type="match status" value="1"/>
</dbReference>
<dbReference type="SMART" id="SM00173">
    <property type="entry name" value="RAS"/>
    <property type="match status" value="1"/>
</dbReference>
<dbReference type="SMART" id="SM00174">
    <property type="entry name" value="RHO"/>
    <property type="match status" value="1"/>
</dbReference>
<dbReference type="SUPFAM" id="SSF52540">
    <property type="entry name" value="P-loop containing nucleoside triphosphate hydrolases"/>
    <property type="match status" value="1"/>
</dbReference>
<dbReference type="PROSITE" id="PS51418">
    <property type="entry name" value="RAN"/>
    <property type="match status" value="1"/>
</dbReference>
<gene>
    <name type="primary">RAN</name>
    <name type="ORF">QccE-21074</name>
</gene>
<reference key="1">
    <citation type="submission" date="2005-06" db="EMBL/GenBank/DDBJ databases">
        <title>DNA sequences of macaque genes expressed in brain or testis and its evolutionary implications.</title>
        <authorList>
            <consortium name="International consortium for macaque cDNA sequencing and analysis"/>
        </authorList>
    </citation>
    <scope>NUCLEOTIDE SEQUENCE [LARGE SCALE MRNA]</scope>
    <source>
        <tissue>Brain cortex</tissue>
    </source>
</reference>
<comment type="function">
    <text evidence="2">GTPase involved in nucleocytoplasmic transport, participating both to the import and the export from the nucleus of proteins and RNAs. Switches between a cytoplasmic GDP- and a nuclear GTP-bound state by nucleotide exchange and GTP hydrolysis. Nuclear import receptors such as importin beta bind their substrates only in the absence of GTP-bound RAN and release them upon direct interaction with GTP-bound RAN, while export receptors behave in the opposite way. Thereby, RAN controls cargo loading and release by transport receptors in the proper compartment and ensures the directionality of the transport. Interaction with RANBP1 induces a conformation change in the complex formed by XPO1 and RAN that triggers the release of the nuclear export signal of cargo proteins. RAN (GTP-bound form) triggers microtubule assembly at mitotic chromosomes and is required for normal mitotic spindle assembly and chromosome segregation. Required for normal progress through mitosis. The complex with BIRC5/survivin plays a role in mitotic spindle formation by serving as a physical scaffold to help deliver the RAN effector molecule TPX2 to microtubules. Acts as a negative regulator of the kinase activity of VRK1 and VRK2. Enhances AR-mediated transactivation.</text>
</comment>
<comment type="catalytic activity">
    <reaction evidence="2">
        <text>GTP + H2O = GDP + phosphate + H(+)</text>
        <dbReference type="Rhea" id="RHEA:19669"/>
        <dbReference type="ChEBI" id="CHEBI:15377"/>
        <dbReference type="ChEBI" id="CHEBI:15378"/>
        <dbReference type="ChEBI" id="CHEBI:37565"/>
        <dbReference type="ChEBI" id="CHEBI:43474"/>
        <dbReference type="ChEBI" id="CHEBI:58189"/>
    </reaction>
    <physiologicalReaction direction="left-to-right" evidence="2">
        <dbReference type="Rhea" id="RHEA:19670"/>
    </physiologicalReaction>
</comment>
<comment type="cofactor">
    <cofactor evidence="2">
        <name>Mg(2+)</name>
        <dbReference type="ChEBI" id="CHEBI:18420"/>
    </cofactor>
    <text evidence="2">Mg(2+) interacts primarily with the phosphate groups of the bound guanine nucleotide.</text>
</comment>
<comment type="subunit">
    <text evidence="1 2 3">Monomer. Interacts with RANGAP1, which promotes RAN-mediated GTP hydrolysis. Interacts with KPNB1. Interaction with KPNB1 inhibits RANGAP1-mediated stimulation of GTPase activity. Interacts with RCC1 which promotes the exchange of RAN-bound GDP by GTP. Interaction with KPNB1 inhibits RCC1-mediated exchange of RAN-bound GDP by GTP. Interacts (GTP-bound form) with TNPO1; the interaction is direct. Interacts (GTP-bound form) with TNPO3; the interaction is direct. Interacts with KPNB1 and with TNPO1; both inhibit RAN GTPase activity. Interacts (via C-terminus) with RANBP1, which alleviates the inhibition of RAN GTPase activity. Interacts with RANGRF, which promotes the release of bound guanine nucleotide. RANGRF and RCC1 compete for an overlapping binding site on RAN. Identified in a complex with KPNA2 and CSE1L; interaction with RANBP1 mediates dissociation of RAN from this complex. Interaction with both RANBP1 and KPNA2 promotes dissociation of the complex between RAN and KPNB1. Identified in a complex composed of RAN, RANGAP1 and RANBP1. Identified in a complex that contains TNPO1, RAN and RANBP1. Identified in a nuclear export complex with XPO1. Found in a nuclear export complex with RANBP3 and XPO1. Interacts with RANBP2/NUP358. Interaction with RANBP1 or RANBP2 induces a conformation change in the complex formed by XPO1 and RAN that triggers the release of the nuclear export signal of cargo proteins. Component of a nuclear export receptor complex composed of KPNB1, RAN, SNUPN and XPO1 (By similarity). Found in a nuclear export complex with RAN, XPO5 and pre-miRNA (By similarity). Interacts (GTP-bound form) with XPO5 (By similarity). Part of a complex consisting of RANBP9, RAN, DYRK1B and COPS5. Interacts with RANBP9 and RANBP10. Interacts in its GTP-bound form with BIRC5/survivin at S and M phases of the cell cycle. Interacts with TERT; the interaction requires hydrogen peroxide-mediated phosphorylation of TERT and transports TERT to the nucleus. Interacts with MAD2L2. Interacts with VRK1 and VRK3. Interacts with VRK2 (By similarity). Interacts with NEMP1 and KPNB1 (By similarity). Interacts (GDP-bound form) with NUTF2; regulates RAN nuclear import. Interacts with CAPG; mediates CAPG nuclear import. Interacts with NUP153. Interacts with the AR N-terminal poly-Gln region; the interaction with AR is inversely correlated with the poly-Gln length (By similarity). Interacts with MYCBP2, which promotes RAN-mediated GTP hydrolysis (By similarity). Interacts with EPG5 (By similarity).</text>
</comment>
<comment type="subcellular location">
    <subcellularLocation>
        <location evidence="2">Nucleus</location>
    </subcellularLocation>
    <subcellularLocation>
        <location evidence="2">Nucleus envelope</location>
    </subcellularLocation>
    <subcellularLocation>
        <location evidence="2">Cytoplasm</location>
        <location evidence="2">Cytosol</location>
    </subcellularLocation>
    <subcellularLocation>
        <location evidence="2">Cytoplasm</location>
    </subcellularLocation>
    <subcellularLocation>
        <location evidence="2">Melanosome</location>
    </subcellularLocation>
    <text evidence="2">Predominantly nuclear during interphase. Becomes dispersed throughout the cytoplasm during mitosis (By similarity). Identified by mass spectrometry in melanosome fractions from stage I to stage IV (By similarity).</text>
</comment>
<comment type="PTM">
    <text evidence="2">Acetylation by KAT5 at Lys-134 is increased during mitosis, impairs RANGRF binding and enhances RCC1 binding. Acetylation at Lys-37 enhances the association with nuclear export components. Deacetylation of Lys-37 by SIRT7 regulates the nuclear export of NF-kappa-B subunit RELA/p65.</text>
</comment>
<comment type="similarity">
    <text evidence="4 5">Belongs to the small GTPase superfamily. Ran family.</text>
</comment>
<name>RAN_MACFA</name>
<organism>
    <name type="scientific">Macaca fascicularis</name>
    <name type="common">Crab-eating macaque</name>
    <name type="synonym">Cynomolgus monkey</name>
    <dbReference type="NCBI Taxonomy" id="9541"/>
    <lineage>
        <taxon>Eukaryota</taxon>
        <taxon>Metazoa</taxon>
        <taxon>Chordata</taxon>
        <taxon>Craniata</taxon>
        <taxon>Vertebrata</taxon>
        <taxon>Euteleostomi</taxon>
        <taxon>Mammalia</taxon>
        <taxon>Eutheria</taxon>
        <taxon>Euarchontoglires</taxon>
        <taxon>Primates</taxon>
        <taxon>Haplorrhini</taxon>
        <taxon>Catarrhini</taxon>
        <taxon>Cercopithecidae</taxon>
        <taxon>Cercopithecinae</taxon>
        <taxon>Macaca</taxon>
    </lineage>
</organism>
<sequence>MAAQGEPQVQFKLVLVGDGGTGKTTFVKRHLTGEFEKKYVATLGVEVHPLVFHTNRGPIKFNVWDTAGQEKFGGLRDGYYIQAQCAIIMFDVTSRVTYKNVPNWHRDLVRVCENIPIVLCGNKVDIKDRKVKAKSIVFHRKKNLQYYDISAKSNYNFEKPFLWLARKLIGDPNLEFVAMPALAPPEVVMDPALAAQYEHDLEVAQTTALPDEDDDL</sequence>
<feature type="initiator methionine" description="Removed" evidence="2">
    <location>
        <position position="1"/>
    </location>
</feature>
<feature type="chain" id="PRO_0000249773" description="GTP-binding nuclear protein Ran">
    <location>
        <begin position="2"/>
        <end position="216"/>
    </location>
</feature>
<feature type="domain" description="Small GTPase Ran-type" evidence="4">
    <location>
        <begin position="7"/>
        <end position="171"/>
    </location>
</feature>
<feature type="region of interest" description="Switch-I" evidence="4">
    <location>
        <begin position="37"/>
        <end position="45"/>
    </location>
</feature>
<feature type="region of interest" description="Switch-II" evidence="4">
    <location>
        <begin position="68"/>
        <end position="84"/>
    </location>
</feature>
<feature type="region of interest" description="Interaction with RANBP1" evidence="2">
    <location>
        <begin position="211"/>
        <end position="216"/>
    </location>
</feature>
<feature type="binding site" evidence="1">
    <location>
        <begin position="18"/>
        <end position="25"/>
    </location>
    <ligand>
        <name>GTP</name>
        <dbReference type="ChEBI" id="CHEBI:37565"/>
    </ligand>
</feature>
<feature type="binding site" evidence="1">
    <location>
        <begin position="36"/>
        <end position="42"/>
    </location>
    <ligand>
        <name>GTP</name>
        <dbReference type="ChEBI" id="CHEBI:37565"/>
    </ligand>
</feature>
<feature type="binding site" evidence="1">
    <location>
        <position position="68"/>
    </location>
    <ligand>
        <name>GTP</name>
        <dbReference type="ChEBI" id="CHEBI:37565"/>
    </ligand>
</feature>
<feature type="binding site" evidence="1">
    <location>
        <begin position="122"/>
        <end position="125"/>
    </location>
    <ligand>
        <name>GTP</name>
        <dbReference type="ChEBI" id="CHEBI:37565"/>
    </ligand>
</feature>
<feature type="binding site" evidence="1">
    <location>
        <begin position="150"/>
        <end position="152"/>
    </location>
    <ligand>
        <name>GTP</name>
        <dbReference type="ChEBI" id="CHEBI:37565"/>
    </ligand>
</feature>
<feature type="site" description="Essential for GTP hydrolysis" evidence="2">
    <location>
        <position position="69"/>
    </location>
</feature>
<feature type="modified residue" description="N-acetylalanine" evidence="2">
    <location>
        <position position="2"/>
    </location>
</feature>
<feature type="modified residue" description="Phosphothreonine" evidence="2">
    <location>
        <position position="24"/>
    </location>
</feature>
<feature type="modified residue" description="N6-acetyllysine" evidence="2">
    <location>
        <position position="37"/>
    </location>
</feature>
<feature type="modified residue" description="N6-acetyllysine" evidence="2">
    <location>
        <position position="60"/>
    </location>
</feature>
<feature type="modified residue" description="N6-acetyllysine; alternate" evidence="2">
    <location>
        <position position="71"/>
    </location>
</feature>
<feature type="modified residue" description="N6-acetyllysine" evidence="2">
    <location>
        <position position="99"/>
    </location>
</feature>
<feature type="modified residue" description="N6-acetyllysine" evidence="2">
    <location>
        <position position="134"/>
    </location>
</feature>
<feature type="modified residue" description="N6-acetyllysine; alternate" evidence="2">
    <location>
        <position position="159"/>
    </location>
</feature>
<feature type="modified residue" description="N6-succinyllysine; alternate" evidence="3">
    <location>
        <position position="159"/>
    </location>
</feature>
<feature type="cross-link" description="Glycyl lysine isopeptide (Lys-Gly) (interchain with G-Cter in SUMO2); alternate" evidence="2">
    <location>
        <position position="71"/>
    </location>
</feature>
<feature type="cross-link" description="Glycyl lysine isopeptide (Lys-Gly) (interchain with G-Cter in ubiquitin); alternate" evidence="2">
    <location>
        <position position="71"/>
    </location>
</feature>
<feature type="cross-link" description="Glycyl lysine isopeptide (Lys-Gly) (interchain with G-Cter in SUMO2)" evidence="2">
    <location>
        <position position="152"/>
    </location>
</feature>
<evidence type="ECO:0000250" key="1">
    <source>
        <dbReference type="UniProtKB" id="P62825"/>
    </source>
</evidence>
<evidence type="ECO:0000250" key="2">
    <source>
        <dbReference type="UniProtKB" id="P62826"/>
    </source>
</evidence>
<evidence type="ECO:0000250" key="3">
    <source>
        <dbReference type="UniProtKB" id="P62827"/>
    </source>
</evidence>
<evidence type="ECO:0000255" key="4">
    <source>
        <dbReference type="PROSITE-ProRule" id="PRU00752"/>
    </source>
</evidence>
<evidence type="ECO:0000305" key="5"/>
<keyword id="KW-0007">Acetylation</keyword>
<keyword id="KW-0131">Cell cycle</keyword>
<keyword id="KW-0132">Cell division</keyword>
<keyword id="KW-0963">Cytoplasm</keyword>
<keyword id="KW-0342">GTP-binding</keyword>
<keyword id="KW-0378">Hydrolase</keyword>
<keyword id="KW-1017">Isopeptide bond</keyword>
<keyword id="KW-0460">Magnesium</keyword>
<keyword id="KW-0479">Metal-binding</keyword>
<keyword id="KW-0498">Mitosis</keyword>
<keyword id="KW-0547">Nucleotide-binding</keyword>
<keyword id="KW-0539">Nucleus</keyword>
<keyword id="KW-0597">Phosphoprotein</keyword>
<keyword id="KW-0653">Protein transport</keyword>
<keyword id="KW-1185">Reference proteome</keyword>
<keyword id="KW-0813">Transport</keyword>
<keyword id="KW-0832">Ubl conjugation</keyword>